<organism>
    <name type="scientific">Salmonella choleraesuis (strain SC-B67)</name>
    <dbReference type="NCBI Taxonomy" id="321314"/>
    <lineage>
        <taxon>Bacteria</taxon>
        <taxon>Pseudomonadati</taxon>
        <taxon>Pseudomonadota</taxon>
        <taxon>Gammaproteobacteria</taxon>
        <taxon>Enterobacterales</taxon>
        <taxon>Enterobacteriaceae</taxon>
        <taxon>Salmonella</taxon>
    </lineage>
</organism>
<reference key="1">
    <citation type="journal article" date="2005" name="Nucleic Acids Res.">
        <title>The genome sequence of Salmonella enterica serovar Choleraesuis, a highly invasive and resistant zoonotic pathogen.</title>
        <authorList>
            <person name="Chiu C.-H."/>
            <person name="Tang P."/>
            <person name="Chu C."/>
            <person name="Hu S."/>
            <person name="Bao Q."/>
            <person name="Yu J."/>
            <person name="Chou Y.-Y."/>
            <person name="Wang H.-S."/>
            <person name="Lee Y.-S."/>
        </authorList>
    </citation>
    <scope>NUCLEOTIDE SEQUENCE [LARGE SCALE GENOMIC DNA]</scope>
    <source>
        <strain>SC-B67</strain>
    </source>
</reference>
<sequence>MDNFLALTLSGTTPRVTQGKGAGFRWRWLGHGLLELTPDAPVDRALILSAGIHGNETAPVEMLDKLLSALYSGSLTLTWRVLVVLGNPQALAAGIRYCHSDMNRMFGGRWQSFAESDETRRARELELSLDTFFSSGQVRVRWHLDLHTAIRGSHHLRFGVLPQRDRPWEADFLAWLGAAGLEALVFHQAPGGTFTHFSSEHFGALSCTLELGKALPFGQNDLTQFSVTSQALSALLSGIETSTSSSPPLRYRVVSQITRHSDKFALYMDAQTLNFTAFAKGTLLAEEGDKRVTVTHDVEYVLFPNPSVACGLRAGLMLERLP</sequence>
<evidence type="ECO:0000255" key="1">
    <source>
        <dbReference type="HAMAP-Rule" id="MF_00767"/>
    </source>
</evidence>
<protein>
    <recommendedName>
        <fullName evidence="1">Succinylglutamate desuccinylase</fullName>
        <ecNumber evidence="1">3.5.1.96</ecNumber>
    </recommendedName>
</protein>
<name>ASTE_SALCH</name>
<comment type="function">
    <text evidence="1">Transforms N(2)-succinylglutamate into succinate and glutamate.</text>
</comment>
<comment type="catalytic activity">
    <reaction evidence="1">
        <text>N-succinyl-L-glutamate + H2O = L-glutamate + succinate</text>
        <dbReference type="Rhea" id="RHEA:15169"/>
        <dbReference type="ChEBI" id="CHEBI:15377"/>
        <dbReference type="ChEBI" id="CHEBI:29985"/>
        <dbReference type="ChEBI" id="CHEBI:30031"/>
        <dbReference type="ChEBI" id="CHEBI:58763"/>
        <dbReference type="EC" id="3.5.1.96"/>
    </reaction>
</comment>
<comment type="cofactor">
    <cofactor evidence="1">
        <name>Zn(2+)</name>
        <dbReference type="ChEBI" id="CHEBI:29105"/>
    </cofactor>
    <text evidence="1">Binds 1 zinc ion per subunit.</text>
</comment>
<comment type="pathway">
    <text evidence="1">Amino-acid degradation; L-arginine degradation via AST pathway; L-glutamate and succinate from L-arginine: step 5/5.</text>
</comment>
<comment type="similarity">
    <text evidence="1">Belongs to the AspA/AstE family. Succinylglutamate desuccinylase subfamily.</text>
</comment>
<accession>Q57PX7</accession>
<dbReference type="EC" id="3.5.1.96" evidence="1"/>
<dbReference type="EMBL" id="AE017220">
    <property type="protein sequence ID" value="AAX65234.1"/>
    <property type="molecule type" value="Genomic_DNA"/>
</dbReference>
<dbReference type="RefSeq" id="WP_001539869.1">
    <property type="nucleotide sequence ID" value="NC_006905.1"/>
</dbReference>
<dbReference type="SMR" id="Q57PX7"/>
<dbReference type="KEGG" id="sec:SCH_1328"/>
<dbReference type="HOGENOM" id="CLU_071608_0_0_6"/>
<dbReference type="UniPathway" id="UPA00185">
    <property type="reaction ID" value="UER00283"/>
</dbReference>
<dbReference type="Proteomes" id="UP000000538">
    <property type="component" value="Chromosome"/>
</dbReference>
<dbReference type="GO" id="GO:0016788">
    <property type="term" value="F:hydrolase activity, acting on ester bonds"/>
    <property type="evidence" value="ECO:0007669"/>
    <property type="project" value="UniProtKB-UniRule"/>
</dbReference>
<dbReference type="GO" id="GO:0009017">
    <property type="term" value="F:succinylglutamate desuccinylase activity"/>
    <property type="evidence" value="ECO:0007669"/>
    <property type="project" value="UniProtKB-EC"/>
</dbReference>
<dbReference type="GO" id="GO:0008270">
    <property type="term" value="F:zinc ion binding"/>
    <property type="evidence" value="ECO:0007669"/>
    <property type="project" value="UniProtKB-UniRule"/>
</dbReference>
<dbReference type="GO" id="GO:0019544">
    <property type="term" value="P:arginine catabolic process to glutamate"/>
    <property type="evidence" value="ECO:0007669"/>
    <property type="project" value="UniProtKB-UniRule"/>
</dbReference>
<dbReference type="GO" id="GO:0019545">
    <property type="term" value="P:arginine catabolic process to succinate"/>
    <property type="evidence" value="ECO:0007669"/>
    <property type="project" value="UniProtKB-UniRule"/>
</dbReference>
<dbReference type="CDD" id="cd03855">
    <property type="entry name" value="M14_ASTE"/>
    <property type="match status" value="1"/>
</dbReference>
<dbReference type="FunFam" id="3.40.630.10:FF:000017">
    <property type="entry name" value="Succinylglutamate desuccinylase"/>
    <property type="match status" value="1"/>
</dbReference>
<dbReference type="Gene3D" id="3.40.630.10">
    <property type="entry name" value="Zn peptidases"/>
    <property type="match status" value="1"/>
</dbReference>
<dbReference type="HAMAP" id="MF_00767">
    <property type="entry name" value="Arg_catab_AstE"/>
    <property type="match status" value="1"/>
</dbReference>
<dbReference type="InterPro" id="IPR050178">
    <property type="entry name" value="AspA/AstE_fam"/>
</dbReference>
<dbReference type="InterPro" id="IPR055438">
    <property type="entry name" value="AstE_AspA_cat"/>
</dbReference>
<dbReference type="InterPro" id="IPR007036">
    <property type="entry name" value="Aste_AspA_hybrid_dom"/>
</dbReference>
<dbReference type="InterPro" id="IPR016681">
    <property type="entry name" value="SuccinylGlu_desuccinylase"/>
</dbReference>
<dbReference type="NCBIfam" id="TIGR03242">
    <property type="entry name" value="arg_catab_astE"/>
    <property type="match status" value="1"/>
</dbReference>
<dbReference type="NCBIfam" id="NF003706">
    <property type="entry name" value="PRK05324.1"/>
    <property type="match status" value="1"/>
</dbReference>
<dbReference type="PANTHER" id="PTHR15162">
    <property type="entry name" value="ASPARTOACYLASE"/>
    <property type="match status" value="1"/>
</dbReference>
<dbReference type="PANTHER" id="PTHR15162:SF7">
    <property type="entry name" value="SUCCINYLGLUTAMATE DESUCCINYLASE"/>
    <property type="match status" value="1"/>
</dbReference>
<dbReference type="Pfam" id="PF24827">
    <property type="entry name" value="AstE_AspA_cat"/>
    <property type="match status" value="1"/>
</dbReference>
<dbReference type="Pfam" id="PF04952">
    <property type="entry name" value="AstE_AspA_hybrid"/>
    <property type="match status" value="1"/>
</dbReference>
<dbReference type="PIRSF" id="PIRSF017020">
    <property type="entry name" value="AstE"/>
    <property type="match status" value="1"/>
</dbReference>
<dbReference type="SUPFAM" id="SSF53187">
    <property type="entry name" value="Zn-dependent exopeptidases"/>
    <property type="match status" value="1"/>
</dbReference>
<keyword id="KW-0056">Arginine metabolism</keyword>
<keyword id="KW-0378">Hydrolase</keyword>
<keyword id="KW-0479">Metal-binding</keyword>
<keyword id="KW-0862">Zinc</keyword>
<feature type="chain" id="PRO_0000257719" description="Succinylglutamate desuccinylase">
    <location>
        <begin position="1"/>
        <end position="322"/>
    </location>
</feature>
<feature type="active site" evidence="1">
    <location>
        <position position="210"/>
    </location>
</feature>
<feature type="binding site" evidence="1">
    <location>
        <position position="53"/>
    </location>
    <ligand>
        <name>Zn(2+)</name>
        <dbReference type="ChEBI" id="CHEBI:29105"/>
    </ligand>
</feature>
<feature type="binding site" evidence="1">
    <location>
        <position position="56"/>
    </location>
    <ligand>
        <name>Zn(2+)</name>
        <dbReference type="ChEBI" id="CHEBI:29105"/>
    </ligand>
</feature>
<feature type="binding site" evidence="1">
    <location>
        <position position="147"/>
    </location>
    <ligand>
        <name>Zn(2+)</name>
        <dbReference type="ChEBI" id="CHEBI:29105"/>
    </ligand>
</feature>
<proteinExistence type="inferred from homology"/>
<gene>
    <name evidence="1" type="primary">astE</name>
    <name type="ordered locus">SCH_1328</name>
</gene>